<sequence length="556" mass="61332">MSVSAFNRRWAAVILEALTRHGVRHICIAPGSRSTPLTLAAAENSAFIHHTHFDERGLGHLALGLAKVSKQPVAVIVTSGTAVANLYPALIEAGLTGEKLILLTADRPPELIDCGANQAIRQPGMFASHPTHSISLPRPTQDIPARWLVSTIDHALGTLHAGGVHINCPFAEPLYGEMDDTGLSWQQRLGDWWQDDKPWLREAPRLESEKQRDWFFWRQKRGVVVAGRMSAEEGKKVALWAQTLGWPLIGDVLSQTGQPLPCADLWLGNAKATSELQQAQIVVQLGSSLTGKRLLQWQASCEPEEYWIVDDIEGRLDPAHHRGRRLIANIADWLELHPAEKRQPWCVEIPRLAEQAMQAVIARRDAFGEAQLAHRISDYLPEQGQLFVGNSLVVRLIDALSQLPAGYPVYSNRGASGIDGLLSTAAGVQRASGKPTLAIVGDLSALYDLNALALLRQVSAPLVLIVVNNNGGQIFSLLPTPQSERERFYLMPQNVHFEHAAAMFELKYHHPQNWQELETAFADAWRTPTTTVIEMVVNDTDGAQTLQQLLAQVSHL</sequence>
<proteinExistence type="inferred from homology"/>
<feature type="chain" id="PRO_0000341846" description="2-succinyl-5-enolpyruvyl-6-hydroxy-3-cyclohexene-1-carboxylate synthase">
    <location>
        <begin position="1"/>
        <end position="556"/>
    </location>
</feature>
<keyword id="KW-0460">Magnesium</keyword>
<keyword id="KW-0464">Manganese</keyword>
<keyword id="KW-0474">Menaquinone biosynthesis</keyword>
<keyword id="KW-0479">Metal-binding</keyword>
<keyword id="KW-0786">Thiamine pyrophosphate</keyword>
<keyword id="KW-0808">Transferase</keyword>
<dbReference type="EC" id="2.2.1.9" evidence="1"/>
<dbReference type="EMBL" id="CP000266">
    <property type="protein sequence ID" value="ABF04446.1"/>
    <property type="status" value="ALT_INIT"/>
    <property type="molecule type" value="Genomic_DNA"/>
</dbReference>
<dbReference type="RefSeq" id="WP_005046935.1">
    <property type="nucleotide sequence ID" value="NC_008258.1"/>
</dbReference>
<dbReference type="SMR" id="Q0T2L9"/>
<dbReference type="KEGG" id="sfv:SFV_2335"/>
<dbReference type="HOGENOM" id="CLU_006051_3_0_6"/>
<dbReference type="UniPathway" id="UPA00079"/>
<dbReference type="UniPathway" id="UPA01057">
    <property type="reaction ID" value="UER00164"/>
</dbReference>
<dbReference type="Proteomes" id="UP000000659">
    <property type="component" value="Chromosome"/>
</dbReference>
<dbReference type="GO" id="GO:0070204">
    <property type="term" value="F:2-succinyl-5-enolpyruvyl-6-hydroxy-3-cyclohexene-1-carboxylic-acid synthase activity"/>
    <property type="evidence" value="ECO:0007669"/>
    <property type="project" value="UniProtKB-UniRule"/>
</dbReference>
<dbReference type="GO" id="GO:0000287">
    <property type="term" value="F:magnesium ion binding"/>
    <property type="evidence" value="ECO:0007669"/>
    <property type="project" value="UniProtKB-UniRule"/>
</dbReference>
<dbReference type="GO" id="GO:0030145">
    <property type="term" value="F:manganese ion binding"/>
    <property type="evidence" value="ECO:0007669"/>
    <property type="project" value="UniProtKB-UniRule"/>
</dbReference>
<dbReference type="GO" id="GO:0030976">
    <property type="term" value="F:thiamine pyrophosphate binding"/>
    <property type="evidence" value="ECO:0007669"/>
    <property type="project" value="UniProtKB-UniRule"/>
</dbReference>
<dbReference type="GO" id="GO:0009234">
    <property type="term" value="P:menaquinone biosynthetic process"/>
    <property type="evidence" value="ECO:0007669"/>
    <property type="project" value="UniProtKB-UniRule"/>
</dbReference>
<dbReference type="CDD" id="cd07037">
    <property type="entry name" value="TPP_PYR_MenD"/>
    <property type="match status" value="1"/>
</dbReference>
<dbReference type="CDD" id="cd02009">
    <property type="entry name" value="TPP_SHCHC_synthase"/>
    <property type="match status" value="1"/>
</dbReference>
<dbReference type="FunFam" id="3.40.50.1220:FF:000010">
    <property type="entry name" value="2-succinyl-5-enolpyruvyl-6-hydroxy-3-cyclohexene-1-carboxylate synthase"/>
    <property type="match status" value="1"/>
</dbReference>
<dbReference type="FunFam" id="3.40.50.970:FF:000029">
    <property type="entry name" value="2-succinyl-5-enolpyruvyl-6-hydroxy-3-cyclohexene-1-carboxylate synthase"/>
    <property type="match status" value="1"/>
</dbReference>
<dbReference type="Gene3D" id="3.40.50.970">
    <property type="match status" value="2"/>
</dbReference>
<dbReference type="Gene3D" id="3.40.50.1220">
    <property type="entry name" value="TPP-binding domain"/>
    <property type="match status" value="1"/>
</dbReference>
<dbReference type="HAMAP" id="MF_01659">
    <property type="entry name" value="MenD"/>
    <property type="match status" value="1"/>
</dbReference>
<dbReference type="InterPro" id="IPR004433">
    <property type="entry name" value="MenaQ_synth_MenD"/>
</dbReference>
<dbReference type="InterPro" id="IPR032264">
    <property type="entry name" value="MenD_middle"/>
</dbReference>
<dbReference type="InterPro" id="IPR029061">
    <property type="entry name" value="THDP-binding"/>
</dbReference>
<dbReference type="InterPro" id="IPR012001">
    <property type="entry name" value="Thiamin_PyroP_enz_TPP-bd_dom"/>
</dbReference>
<dbReference type="InterPro" id="IPR011766">
    <property type="entry name" value="TPP_enzyme_TPP-bd"/>
</dbReference>
<dbReference type="NCBIfam" id="TIGR00173">
    <property type="entry name" value="menD"/>
    <property type="match status" value="1"/>
</dbReference>
<dbReference type="PANTHER" id="PTHR42916">
    <property type="entry name" value="2-SUCCINYL-5-ENOLPYRUVYL-6-HYDROXY-3-CYCLOHEXENE-1-CARBOXYLATE SYNTHASE"/>
    <property type="match status" value="1"/>
</dbReference>
<dbReference type="PANTHER" id="PTHR42916:SF1">
    <property type="entry name" value="PROTEIN PHYLLO, CHLOROPLASTIC"/>
    <property type="match status" value="1"/>
</dbReference>
<dbReference type="Pfam" id="PF02775">
    <property type="entry name" value="TPP_enzyme_C"/>
    <property type="match status" value="1"/>
</dbReference>
<dbReference type="Pfam" id="PF16582">
    <property type="entry name" value="TPP_enzyme_M_2"/>
    <property type="match status" value="1"/>
</dbReference>
<dbReference type="Pfam" id="PF02776">
    <property type="entry name" value="TPP_enzyme_N"/>
    <property type="match status" value="1"/>
</dbReference>
<dbReference type="PIRSF" id="PIRSF004983">
    <property type="entry name" value="MenD"/>
    <property type="match status" value="1"/>
</dbReference>
<dbReference type="SUPFAM" id="SSF52518">
    <property type="entry name" value="Thiamin diphosphate-binding fold (THDP-binding)"/>
    <property type="match status" value="2"/>
</dbReference>
<gene>
    <name evidence="1" type="primary">menD</name>
    <name type="ordered locus">SFV_2335</name>
</gene>
<name>MEND_SHIF8</name>
<comment type="function">
    <text evidence="1">Catalyzes the thiamine diphosphate-dependent decarboxylation of 2-oxoglutarate and the subsequent addition of the resulting succinic semialdehyde-thiamine pyrophosphate anion to isochorismate to yield 2-succinyl-5-enolpyruvyl-6-hydroxy-3-cyclohexene-1-carboxylate (SEPHCHC).</text>
</comment>
<comment type="catalytic activity">
    <reaction evidence="1">
        <text>isochorismate + 2-oxoglutarate + H(+) = 5-enolpyruvoyl-6-hydroxy-2-succinyl-cyclohex-3-ene-1-carboxylate + CO2</text>
        <dbReference type="Rhea" id="RHEA:25593"/>
        <dbReference type="ChEBI" id="CHEBI:15378"/>
        <dbReference type="ChEBI" id="CHEBI:16526"/>
        <dbReference type="ChEBI" id="CHEBI:16810"/>
        <dbReference type="ChEBI" id="CHEBI:29780"/>
        <dbReference type="ChEBI" id="CHEBI:58818"/>
        <dbReference type="EC" id="2.2.1.9"/>
    </reaction>
</comment>
<comment type="cofactor">
    <cofactor evidence="1">
        <name>Mg(2+)</name>
        <dbReference type="ChEBI" id="CHEBI:18420"/>
    </cofactor>
    <cofactor evidence="1">
        <name>Mn(2+)</name>
        <dbReference type="ChEBI" id="CHEBI:29035"/>
    </cofactor>
</comment>
<comment type="cofactor">
    <cofactor evidence="1">
        <name>thiamine diphosphate</name>
        <dbReference type="ChEBI" id="CHEBI:58937"/>
    </cofactor>
    <text evidence="1">Binds 1 thiamine pyrophosphate per subunit.</text>
</comment>
<comment type="pathway">
    <text evidence="1">Quinol/quinone metabolism; 1,4-dihydroxy-2-naphthoate biosynthesis; 1,4-dihydroxy-2-naphthoate from chorismate: step 2/7.</text>
</comment>
<comment type="pathway">
    <text evidence="1">Quinol/quinone metabolism; menaquinone biosynthesis.</text>
</comment>
<comment type="subunit">
    <text evidence="1">Homodimer.</text>
</comment>
<comment type="similarity">
    <text evidence="1">Belongs to the TPP enzyme family. MenD subfamily.</text>
</comment>
<comment type="sequence caution" evidence="2">
    <conflict type="erroneous initiation">
        <sequence resource="EMBL-CDS" id="ABF04446"/>
    </conflict>
</comment>
<reference key="1">
    <citation type="journal article" date="2006" name="BMC Genomics">
        <title>Complete genome sequence of Shigella flexneri 5b and comparison with Shigella flexneri 2a.</title>
        <authorList>
            <person name="Nie H."/>
            <person name="Yang F."/>
            <person name="Zhang X."/>
            <person name="Yang J."/>
            <person name="Chen L."/>
            <person name="Wang J."/>
            <person name="Xiong Z."/>
            <person name="Peng J."/>
            <person name="Sun L."/>
            <person name="Dong J."/>
            <person name="Xue Y."/>
            <person name="Xu X."/>
            <person name="Chen S."/>
            <person name="Yao Z."/>
            <person name="Shen Y."/>
            <person name="Jin Q."/>
        </authorList>
    </citation>
    <scope>NUCLEOTIDE SEQUENCE [LARGE SCALE GENOMIC DNA]</scope>
    <source>
        <strain>8401</strain>
    </source>
</reference>
<organism>
    <name type="scientific">Shigella flexneri serotype 5b (strain 8401)</name>
    <dbReference type="NCBI Taxonomy" id="373384"/>
    <lineage>
        <taxon>Bacteria</taxon>
        <taxon>Pseudomonadati</taxon>
        <taxon>Pseudomonadota</taxon>
        <taxon>Gammaproteobacteria</taxon>
        <taxon>Enterobacterales</taxon>
        <taxon>Enterobacteriaceae</taxon>
        <taxon>Shigella</taxon>
    </lineage>
</organism>
<evidence type="ECO:0000255" key="1">
    <source>
        <dbReference type="HAMAP-Rule" id="MF_01659"/>
    </source>
</evidence>
<evidence type="ECO:0000305" key="2"/>
<protein>
    <recommendedName>
        <fullName evidence="1">2-succinyl-5-enolpyruvyl-6-hydroxy-3-cyclohexene-1-carboxylate synthase</fullName>
        <shortName evidence="1">SEPHCHC synthase</shortName>
        <ecNumber evidence="1">2.2.1.9</ecNumber>
    </recommendedName>
    <alternativeName>
        <fullName evidence="1">Menaquinone biosynthesis protein MenD</fullName>
    </alternativeName>
</protein>
<accession>Q0T2L9</accession>